<comment type="catalytic activity">
    <reaction evidence="1">
        <text>beta-D-fructose 1,6-bisphosphate + H2O = beta-D-fructose 6-phosphate + phosphate</text>
        <dbReference type="Rhea" id="RHEA:11064"/>
        <dbReference type="ChEBI" id="CHEBI:15377"/>
        <dbReference type="ChEBI" id="CHEBI:32966"/>
        <dbReference type="ChEBI" id="CHEBI:43474"/>
        <dbReference type="ChEBI" id="CHEBI:57634"/>
        <dbReference type="EC" id="3.1.3.11"/>
    </reaction>
</comment>
<comment type="cofactor">
    <cofactor evidence="1">
        <name>Mg(2+)</name>
        <dbReference type="ChEBI" id="CHEBI:18420"/>
    </cofactor>
    <text evidence="1">Binds 2 magnesium ions per subunit.</text>
</comment>
<comment type="pathway">
    <text evidence="1">Carbohydrate biosynthesis; gluconeogenesis.</text>
</comment>
<comment type="subunit">
    <text evidence="1">Homotetramer.</text>
</comment>
<comment type="subcellular location">
    <subcellularLocation>
        <location evidence="1">Cytoplasm</location>
    </subcellularLocation>
</comment>
<comment type="similarity">
    <text evidence="1">Belongs to the FBPase class 1 family.</text>
</comment>
<dbReference type="EC" id="3.1.3.11" evidence="1"/>
<dbReference type="EMBL" id="CP000800">
    <property type="protein sequence ID" value="ABV18239.1"/>
    <property type="molecule type" value="Genomic_DNA"/>
</dbReference>
<dbReference type="RefSeq" id="WP_000853753.1">
    <property type="nucleotide sequence ID" value="NC_009801.1"/>
</dbReference>
<dbReference type="SMR" id="A7ZVB0"/>
<dbReference type="GeneID" id="86861371"/>
<dbReference type="KEGG" id="ecw:EcE24377A_4801"/>
<dbReference type="HOGENOM" id="CLU_039977_2_2_6"/>
<dbReference type="UniPathway" id="UPA00138"/>
<dbReference type="Proteomes" id="UP000001122">
    <property type="component" value="Chromosome"/>
</dbReference>
<dbReference type="GO" id="GO:0005829">
    <property type="term" value="C:cytosol"/>
    <property type="evidence" value="ECO:0007669"/>
    <property type="project" value="TreeGrafter"/>
</dbReference>
<dbReference type="GO" id="GO:0042132">
    <property type="term" value="F:fructose 1,6-bisphosphate 1-phosphatase activity"/>
    <property type="evidence" value="ECO:0007669"/>
    <property type="project" value="UniProtKB-UniRule"/>
</dbReference>
<dbReference type="GO" id="GO:0000287">
    <property type="term" value="F:magnesium ion binding"/>
    <property type="evidence" value="ECO:0007669"/>
    <property type="project" value="UniProtKB-UniRule"/>
</dbReference>
<dbReference type="GO" id="GO:0030388">
    <property type="term" value="P:fructose 1,6-bisphosphate metabolic process"/>
    <property type="evidence" value="ECO:0007669"/>
    <property type="project" value="TreeGrafter"/>
</dbReference>
<dbReference type="GO" id="GO:0006002">
    <property type="term" value="P:fructose 6-phosphate metabolic process"/>
    <property type="evidence" value="ECO:0007669"/>
    <property type="project" value="TreeGrafter"/>
</dbReference>
<dbReference type="GO" id="GO:0006000">
    <property type="term" value="P:fructose metabolic process"/>
    <property type="evidence" value="ECO:0007669"/>
    <property type="project" value="TreeGrafter"/>
</dbReference>
<dbReference type="GO" id="GO:0006094">
    <property type="term" value="P:gluconeogenesis"/>
    <property type="evidence" value="ECO:0007669"/>
    <property type="project" value="UniProtKB-UniRule"/>
</dbReference>
<dbReference type="GO" id="GO:0005986">
    <property type="term" value="P:sucrose biosynthetic process"/>
    <property type="evidence" value="ECO:0007669"/>
    <property type="project" value="TreeGrafter"/>
</dbReference>
<dbReference type="CDD" id="cd00354">
    <property type="entry name" value="FBPase"/>
    <property type="match status" value="1"/>
</dbReference>
<dbReference type="FunFam" id="3.30.540.10:FF:000002">
    <property type="entry name" value="Fructose-1,6-bisphosphatase class 1"/>
    <property type="match status" value="1"/>
</dbReference>
<dbReference type="FunFam" id="3.40.190.80:FF:000001">
    <property type="entry name" value="Fructose-1,6-bisphosphatase class 1"/>
    <property type="match status" value="1"/>
</dbReference>
<dbReference type="Gene3D" id="3.40.190.80">
    <property type="match status" value="1"/>
</dbReference>
<dbReference type="Gene3D" id="3.30.540.10">
    <property type="entry name" value="Fructose-1,6-Bisphosphatase, subunit A, domain 1"/>
    <property type="match status" value="1"/>
</dbReference>
<dbReference type="HAMAP" id="MF_01855">
    <property type="entry name" value="FBPase_class1"/>
    <property type="match status" value="1"/>
</dbReference>
<dbReference type="InterPro" id="IPR044015">
    <property type="entry name" value="FBPase_C_dom"/>
</dbReference>
<dbReference type="InterPro" id="IPR000146">
    <property type="entry name" value="FBPase_class-1"/>
</dbReference>
<dbReference type="InterPro" id="IPR033391">
    <property type="entry name" value="FBPase_N"/>
</dbReference>
<dbReference type="InterPro" id="IPR028343">
    <property type="entry name" value="FBPtase"/>
</dbReference>
<dbReference type="InterPro" id="IPR020548">
    <property type="entry name" value="Fructose_bisphosphatase_AS"/>
</dbReference>
<dbReference type="NCBIfam" id="NF006778">
    <property type="entry name" value="PRK09293.1-1"/>
    <property type="match status" value="1"/>
</dbReference>
<dbReference type="NCBIfam" id="NF006779">
    <property type="entry name" value="PRK09293.1-3"/>
    <property type="match status" value="1"/>
</dbReference>
<dbReference type="PANTHER" id="PTHR11556">
    <property type="entry name" value="FRUCTOSE-1,6-BISPHOSPHATASE-RELATED"/>
    <property type="match status" value="1"/>
</dbReference>
<dbReference type="PANTHER" id="PTHR11556:SF35">
    <property type="entry name" value="SEDOHEPTULOSE-1,7-BISPHOSPHATASE, CHLOROPLASTIC"/>
    <property type="match status" value="1"/>
</dbReference>
<dbReference type="Pfam" id="PF00316">
    <property type="entry name" value="FBPase"/>
    <property type="match status" value="1"/>
</dbReference>
<dbReference type="Pfam" id="PF18913">
    <property type="entry name" value="FBPase_C"/>
    <property type="match status" value="1"/>
</dbReference>
<dbReference type="PIRSF" id="PIRSF500210">
    <property type="entry name" value="FBPtase"/>
    <property type="match status" value="1"/>
</dbReference>
<dbReference type="PIRSF" id="PIRSF000904">
    <property type="entry name" value="FBPtase_SBPase"/>
    <property type="match status" value="1"/>
</dbReference>
<dbReference type="PRINTS" id="PR00115">
    <property type="entry name" value="F16BPHPHTASE"/>
</dbReference>
<dbReference type="SUPFAM" id="SSF56655">
    <property type="entry name" value="Carbohydrate phosphatase"/>
    <property type="match status" value="1"/>
</dbReference>
<dbReference type="PROSITE" id="PS00124">
    <property type="entry name" value="FBPASE"/>
    <property type="match status" value="1"/>
</dbReference>
<feature type="chain" id="PRO_0000364549" description="Fructose-1,6-bisphosphatase class 1">
    <location>
        <begin position="1"/>
        <end position="332"/>
    </location>
</feature>
<feature type="binding site" evidence="1">
    <location>
        <position position="89"/>
    </location>
    <ligand>
        <name>Mg(2+)</name>
        <dbReference type="ChEBI" id="CHEBI:18420"/>
        <label>1</label>
    </ligand>
</feature>
<feature type="binding site" evidence="1">
    <location>
        <position position="110"/>
    </location>
    <ligand>
        <name>Mg(2+)</name>
        <dbReference type="ChEBI" id="CHEBI:18420"/>
        <label>1</label>
    </ligand>
</feature>
<feature type="binding site" evidence="1">
    <location>
        <position position="110"/>
    </location>
    <ligand>
        <name>Mg(2+)</name>
        <dbReference type="ChEBI" id="CHEBI:18420"/>
        <label>2</label>
    </ligand>
</feature>
<feature type="binding site" evidence="1">
    <location>
        <position position="112"/>
    </location>
    <ligand>
        <name>Mg(2+)</name>
        <dbReference type="ChEBI" id="CHEBI:18420"/>
        <label>1</label>
    </ligand>
</feature>
<feature type="binding site" evidence="1">
    <location>
        <begin position="113"/>
        <end position="116"/>
    </location>
    <ligand>
        <name>substrate</name>
    </ligand>
</feature>
<feature type="binding site" evidence="1">
    <location>
        <position position="113"/>
    </location>
    <ligand>
        <name>Mg(2+)</name>
        <dbReference type="ChEBI" id="CHEBI:18420"/>
        <label>2</label>
    </ligand>
</feature>
<feature type="binding site" evidence="1">
    <location>
        <position position="206"/>
    </location>
    <ligand>
        <name>substrate</name>
    </ligand>
</feature>
<feature type="binding site" evidence="1">
    <location>
        <position position="239"/>
    </location>
    <ligand>
        <name>substrate</name>
    </ligand>
</feature>
<feature type="binding site" evidence="1">
    <location>
        <begin position="257"/>
        <end position="259"/>
    </location>
    <ligand>
        <name>substrate</name>
    </ligand>
</feature>
<feature type="binding site" evidence="1">
    <location>
        <position position="269"/>
    </location>
    <ligand>
        <name>substrate</name>
    </ligand>
</feature>
<feature type="binding site" evidence="1">
    <location>
        <position position="275"/>
    </location>
    <ligand>
        <name>Mg(2+)</name>
        <dbReference type="ChEBI" id="CHEBI:18420"/>
        <label>2</label>
    </ligand>
</feature>
<sequence>MKTLGEFIVEKQHEFSHATGELTALLSAIKLGAKIIHRDINKAGLVDILGASGAENVQGEVQQKLDLFANEKLKAALKARDIVAGIASEEEDEIVVFEGCEHAKYVVLMDPLDGSSNIDVNVSVGTIFSIYRRVTPVGTPVTEEDFLQPGNKQVAAGYVVYGSSTMLVYTTGCGVHAFTYDPSLGVFCLCQERMRFPEKGKTYSINEGNYIKFPNGVKKYIKFCQEEDKSTNRPYTSRYIGSLVADFHRNLLKGGIYLYPSTASHPDGKLRLLYECNPMAFLAEQAGGKASDGKERILDIIPETLHQRRSFFVGNDHMVEDVERFIREFPDA</sequence>
<keyword id="KW-0119">Carbohydrate metabolism</keyword>
<keyword id="KW-0963">Cytoplasm</keyword>
<keyword id="KW-0378">Hydrolase</keyword>
<keyword id="KW-0460">Magnesium</keyword>
<keyword id="KW-0479">Metal-binding</keyword>
<keyword id="KW-1185">Reference proteome</keyword>
<proteinExistence type="inferred from homology"/>
<evidence type="ECO:0000255" key="1">
    <source>
        <dbReference type="HAMAP-Rule" id="MF_01855"/>
    </source>
</evidence>
<gene>
    <name evidence="1" type="primary">fbp</name>
    <name type="ordered locus">EcE24377A_4801</name>
</gene>
<protein>
    <recommendedName>
        <fullName evidence="1">Fructose-1,6-bisphosphatase class 1</fullName>
        <shortName evidence="1">FBPase class 1</shortName>
        <ecNumber evidence="1">3.1.3.11</ecNumber>
    </recommendedName>
    <alternativeName>
        <fullName evidence="1">D-fructose-1,6-bisphosphate 1-phosphohydrolase class 1</fullName>
    </alternativeName>
</protein>
<name>F16PA_ECO24</name>
<reference key="1">
    <citation type="journal article" date="2008" name="J. Bacteriol.">
        <title>The pangenome structure of Escherichia coli: comparative genomic analysis of E. coli commensal and pathogenic isolates.</title>
        <authorList>
            <person name="Rasko D.A."/>
            <person name="Rosovitz M.J."/>
            <person name="Myers G.S.A."/>
            <person name="Mongodin E.F."/>
            <person name="Fricke W.F."/>
            <person name="Gajer P."/>
            <person name="Crabtree J."/>
            <person name="Sebaihia M."/>
            <person name="Thomson N.R."/>
            <person name="Chaudhuri R."/>
            <person name="Henderson I.R."/>
            <person name="Sperandio V."/>
            <person name="Ravel J."/>
        </authorList>
    </citation>
    <scope>NUCLEOTIDE SEQUENCE [LARGE SCALE GENOMIC DNA]</scope>
    <source>
        <strain>E24377A / ETEC</strain>
    </source>
</reference>
<accession>A7ZVB0</accession>
<organism>
    <name type="scientific">Escherichia coli O139:H28 (strain E24377A / ETEC)</name>
    <dbReference type="NCBI Taxonomy" id="331111"/>
    <lineage>
        <taxon>Bacteria</taxon>
        <taxon>Pseudomonadati</taxon>
        <taxon>Pseudomonadota</taxon>
        <taxon>Gammaproteobacteria</taxon>
        <taxon>Enterobacterales</taxon>
        <taxon>Enterobacteriaceae</taxon>
        <taxon>Escherichia</taxon>
    </lineage>
</organism>